<sequence length="544" mass="57361">MAAKQVIFGDDARAKIVNGVNILANAVKVTLGPKGRNVVLERSFGSPTVTKDGVSVAKEIELSDKLENMGAQLVKEVASKTNDNAGDGTTTATVLAQAIVREGFKYVAAGFNPTDLKRGIDKAVAEIVNEIKAIAKPTTTSKEIAQVGSISANSDADIGQIIADAMDKVGKEGVITVEDGSGLQNELDVVEGMQFDRGYLSPYFINNPERQIALLENPFVLLYDKKISNIRDLLPTLEQVAKAGRPLLIIAEDVEGEALATLVVNNIRGILKAVAVKAPGFGDRRKAMLEDIAILTGGTVIAEEVGLSLEKVTLENLGQAKRVEIGKENTTIIDGAGSENNIKVRIDQIKKQIEDATSDYDREKLQERVAKLAGGVAVIKVGAATETEMKEKKARVEDALHATRAAVEEGIVPGGGVALLRARSSIKELKGDNPDQDAGIKIVLRAIEEPLRQIVANAGDEPSVVVNKVLEGTGNYGYNASNGTYGDLVELGVLDPAKVTRSALQNAASVASLILTTDALVAELPKEEAAPAMPDAGGMGGMGF</sequence>
<organism>
    <name type="scientific">Methylobacillus flagellatus (strain ATCC 51484 / DSM 6875 / VKM B-1610 / KT)</name>
    <dbReference type="NCBI Taxonomy" id="265072"/>
    <lineage>
        <taxon>Bacteria</taxon>
        <taxon>Pseudomonadati</taxon>
        <taxon>Pseudomonadota</taxon>
        <taxon>Betaproteobacteria</taxon>
        <taxon>Nitrosomonadales</taxon>
        <taxon>Methylophilaceae</taxon>
        <taxon>Methylobacillus</taxon>
    </lineage>
</organism>
<protein>
    <recommendedName>
        <fullName evidence="1">Chaperonin GroEL</fullName>
        <ecNumber evidence="1">5.6.1.7</ecNumber>
    </recommendedName>
    <alternativeName>
        <fullName evidence="1">60 kDa chaperonin</fullName>
    </alternativeName>
    <alternativeName>
        <fullName evidence="1">Chaperonin-60</fullName>
        <shortName evidence="1">Cpn60</shortName>
    </alternativeName>
</protein>
<feature type="chain" id="PRO_0000256927" description="Chaperonin GroEL">
    <location>
        <begin position="1"/>
        <end position="544"/>
    </location>
</feature>
<feature type="binding site" evidence="1">
    <location>
        <begin position="30"/>
        <end position="33"/>
    </location>
    <ligand>
        <name>ATP</name>
        <dbReference type="ChEBI" id="CHEBI:30616"/>
    </ligand>
</feature>
<feature type="binding site" evidence="1">
    <location>
        <position position="51"/>
    </location>
    <ligand>
        <name>ATP</name>
        <dbReference type="ChEBI" id="CHEBI:30616"/>
    </ligand>
</feature>
<feature type="binding site" evidence="1">
    <location>
        <begin position="87"/>
        <end position="91"/>
    </location>
    <ligand>
        <name>ATP</name>
        <dbReference type="ChEBI" id="CHEBI:30616"/>
    </ligand>
</feature>
<feature type="binding site" evidence="1">
    <location>
        <position position="415"/>
    </location>
    <ligand>
        <name>ATP</name>
        <dbReference type="ChEBI" id="CHEBI:30616"/>
    </ligand>
</feature>
<feature type="binding site" evidence="1">
    <location>
        <position position="495"/>
    </location>
    <ligand>
        <name>ATP</name>
        <dbReference type="ChEBI" id="CHEBI:30616"/>
    </ligand>
</feature>
<reference key="1">
    <citation type="submission" date="2006-03" db="EMBL/GenBank/DDBJ databases">
        <title>Complete sequence of Methylobacillus flagellatus KT.</title>
        <authorList>
            <consortium name="US DOE Joint Genome Institute"/>
            <person name="Copeland A."/>
            <person name="Lucas S."/>
            <person name="Lapidus A."/>
            <person name="Barry K."/>
            <person name="Detter J.C."/>
            <person name="Glavina del Rio T."/>
            <person name="Hammon N."/>
            <person name="Israni S."/>
            <person name="Dalin E."/>
            <person name="Tice H."/>
            <person name="Pitluck S."/>
            <person name="Brettin T."/>
            <person name="Bruce D."/>
            <person name="Han C."/>
            <person name="Tapia R."/>
            <person name="Saunders E."/>
            <person name="Gilna P."/>
            <person name="Schmutz J."/>
            <person name="Larimer F."/>
            <person name="Land M."/>
            <person name="Kyrpides N."/>
            <person name="Anderson I."/>
            <person name="Richardson P."/>
        </authorList>
    </citation>
    <scope>NUCLEOTIDE SEQUENCE [LARGE SCALE GENOMIC DNA]</scope>
    <source>
        <strain>ATCC 51484 / DSM 6875 / VKM B-1610 / KT</strain>
    </source>
</reference>
<name>CH60_METFK</name>
<evidence type="ECO:0000255" key="1">
    <source>
        <dbReference type="HAMAP-Rule" id="MF_00600"/>
    </source>
</evidence>
<dbReference type="EC" id="5.6.1.7" evidence="1"/>
<dbReference type="EMBL" id="CP000284">
    <property type="protein sequence ID" value="ABE48635.1"/>
    <property type="molecule type" value="Genomic_DNA"/>
</dbReference>
<dbReference type="RefSeq" id="WP_011478732.1">
    <property type="nucleotide sequence ID" value="NC_007947.1"/>
</dbReference>
<dbReference type="SMR" id="Q1H4F2"/>
<dbReference type="STRING" id="265072.Mfla_0364"/>
<dbReference type="KEGG" id="mfa:Mfla_0364"/>
<dbReference type="eggNOG" id="COG0459">
    <property type="taxonomic scope" value="Bacteria"/>
</dbReference>
<dbReference type="HOGENOM" id="CLU_016503_3_0_4"/>
<dbReference type="OrthoDB" id="9766614at2"/>
<dbReference type="Proteomes" id="UP000002440">
    <property type="component" value="Chromosome"/>
</dbReference>
<dbReference type="GO" id="GO:0005737">
    <property type="term" value="C:cytoplasm"/>
    <property type="evidence" value="ECO:0007669"/>
    <property type="project" value="UniProtKB-SubCell"/>
</dbReference>
<dbReference type="GO" id="GO:0005524">
    <property type="term" value="F:ATP binding"/>
    <property type="evidence" value="ECO:0007669"/>
    <property type="project" value="UniProtKB-UniRule"/>
</dbReference>
<dbReference type="GO" id="GO:0140662">
    <property type="term" value="F:ATP-dependent protein folding chaperone"/>
    <property type="evidence" value="ECO:0007669"/>
    <property type="project" value="InterPro"/>
</dbReference>
<dbReference type="GO" id="GO:0016853">
    <property type="term" value="F:isomerase activity"/>
    <property type="evidence" value="ECO:0007669"/>
    <property type="project" value="UniProtKB-KW"/>
</dbReference>
<dbReference type="GO" id="GO:0051082">
    <property type="term" value="F:unfolded protein binding"/>
    <property type="evidence" value="ECO:0007669"/>
    <property type="project" value="UniProtKB-UniRule"/>
</dbReference>
<dbReference type="GO" id="GO:0042026">
    <property type="term" value="P:protein refolding"/>
    <property type="evidence" value="ECO:0007669"/>
    <property type="project" value="UniProtKB-UniRule"/>
</dbReference>
<dbReference type="CDD" id="cd03344">
    <property type="entry name" value="GroEL"/>
    <property type="match status" value="1"/>
</dbReference>
<dbReference type="FunFam" id="1.10.560.10:FF:000001">
    <property type="entry name" value="60 kDa chaperonin"/>
    <property type="match status" value="1"/>
</dbReference>
<dbReference type="FunFam" id="3.50.7.10:FF:000001">
    <property type="entry name" value="60 kDa chaperonin"/>
    <property type="match status" value="1"/>
</dbReference>
<dbReference type="Gene3D" id="3.50.7.10">
    <property type="entry name" value="GroEL"/>
    <property type="match status" value="1"/>
</dbReference>
<dbReference type="Gene3D" id="1.10.560.10">
    <property type="entry name" value="GroEL-like equatorial domain"/>
    <property type="match status" value="1"/>
</dbReference>
<dbReference type="Gene3D" id="3.30.260.10">
    <property type="entry name" value="TCP-1-like chaperonin intermediate domain"/>
    <property type="match status" value="1"/>
</dbReference>
<dbReference type="HAMAP" id="MF_00600">
    <property type="entry name" value="CH60"/>
    <property type="match status" value="1"/>
</dbReference>
<dbReference type="InterPro" id="IPR018370">
    <property type="entry name" value="Chaperonin_Cpn60_CS"/>
</dbReference>
<dbReference type="InterPro" id="IPR001844">
    <property type="entry name" value="Cpn60/GroEL"/>
</dbReference>
<dbReference type="InterPro" id="IPR002423">
    <property type="entry name" value="Cpn60/GroEL/TCP-1"/>
</dbReference>
<dbReference type="InterPro" id="IPR027409">
    <property type="entry name" value="GroEL-like_apical_dom_sf"/>
</dbReference>
<dbReference type="InterPro" id="IPR027413">
    <property type="entry name" value="GROEL-like_equatorial_sf"/>
</dbReference>
<dbReference type="InterPro" id="IPR027410">
    <property type="entry name" value="TCP-1-like_intermed_sf"/>
</dbReference>
<dbReference type="NCBIfam" id="TIGR02348">
    <property type="entry name" value="GroEL"/>
    <property type="match status" value="1"/>
</dbReference>
<dbReference type="NCBIfam" id="NF000592">
    <property type="entry name" value="PRK00013.1"/>
    <property type="match status" value="1"/>
</dbReference>
<dbReference type="NCBIfam" id="NF009487">
    <property type="entry name" value="PRK12849.1"/>
    <property type="match status" value="1"/>
</dbReference>
<dbReference type="NCBIfam" id="NF009488">
    <property type="entry name" value="PRK12850.1"/>
    <property type="match status" value="1"/>
</dbReference>
<dbReference type="NCBIfam" id="NF009489">
    <property type="entry name" value="PRK12851.1"/>
    <property type="match status" value="1"/>
</dbReference>
<dbReference type="PANTHER" id="PTHR45633">
    <property type="entry name" value="60 KDA HEAT SHOCK PROTEIN, MITOCHONDRIAL"/>
    <property type="match status" value="1"/>
</dbReference>
<dbReference type="Pfam" id="PF00118">
    <property type="entry name" value="Cpn60_TCP1"/>
    <property type="match status" value="1"/>
</dbReference>
<dbReference type="PRINTS" id="PR00298">
    <property type="entry name" value="CHAPERONIN60"/>
</dbReference>
<dbReference type="SUPFAM" id="SSF52029">
    <property type="entry name" value="GroEL apical domain-like"/>
    <property type="match status" value="1"/>
</dbReference>
<dbReference type="SUPFAM" id="SSF48592">
    <property type="entry name" value="GroEL equatorial domain-like"/>
    <property type="match status" value="1"/>
</dbReference>
<dbReference type="SUPFAM" id="SSF54849">
    <property type="entry name" value="GroEL-intermediate domain like"/>
    <property type="match status" value="1"/>
</dbReference>
<dbReference type="PROSITE" id="PS00296">
    <property type="entry name" value="CHAPERONINS_CPN60"/>
    <property type="match status" value="1"/>
</dbReference>
<comment type="function">
    <text evidence="1">Together with its co-chaperonin GroES, plays an essential role in assisting protein folding. The GroEL-GroES system forms a nano-cage that allows encapsulation of the non-native substrate proteins and provides a physical environment optimized to promote and accelerate protein folding.</text>
</comment>
<comment type="catalytic activity">
    <reaction evidence="1">
        <text>ATP + H2O + a folded polypeptide = ADP + phosphate + an unfolded polypeptide.</text>
        <dbReference type="EC" id="5.6.1.7"/>
    </reaction>
</comment>
<comment type="subunit">
    <text evidence="1">Forms a cylinder of 14 subunits composed of two heptameric rings stacked back-to-back. Interacts with the co-chaperonin GroES.</text>
</comment>
<comment type="subcellular location">
    <subcellularLocation>
        <location evidence="1">Cytoplasm</location>
    </subcellularLocation>
</comment>
<comment type="similarity">
    <text evidence="1">Belongs to the chaperonin (HSP60) family.</text>
</comment>
<accession>Q1H4F2</accession>
<gene>
    <name evidence="1" type="primary">groEL</name>
    <name evidence="1" type="synonym">groL</name>
    <name type="ordered locus">Mfla_0364</name>
</gene>
<keyword id="KW-0067">ATP-binding</keyword>
<keyword id="KW-0143">Chaperone</keyword>
<keyword id="KW-0963">Cytoplasm</keyword>
<keyword id="KW-0413">Isomerase</keyword>
<keyword id="KW-0547">Nucleotide-binding</keyword>
<keyword id="KW-1185">Reference proteome</keyword>
<proteinExistence type="inferred from homology"/>